<gene>
    <name evidence="1" type="primary">rnc</name>
    <name type="ordered locus">AM1069</name>
</gene>
<organism>
    <name type="scientific">Anaplasma marginale (strain St. Maries)</name>
    <dbReference type="NCBI Taxonomy" id="234826"/>
    <lineage>
        <taxon>Bacteria</taxon>
        <taxon>Pseudomonadati</taxon>
        <taxon>Pseudomonadota</taxon>
        <taxon>Alphaproteobacteria</taxon>
        <taxon>Rickettsiales</taxon>
        <taxon>Anaplasmataceae</taxon>
        <taxon>Anaplasma</taxon>
    </lineage>
</organism>
<evidence type="ECO:0000255" key="1">
    <source>
        <dbReference type="HAMAP-Rule" id="MF_00104"/>
    </source>
</evidence>
<feature type="chain" id="PRO_0000228489" description="Ribonuclease 3">
    <location>
        <begin position="1"/>
        <end position="232"/>
    </location>
</feature>
<feature type="domain" description="RNase III" evidence="1">
    <location>
        <begin position="10"/>
        <end position="135"/>
    </location>
</feature>
<feature type="domain" description="DRBM" evidence="1">
    <location>
        <begin position="161"/>
        <end position="230"/>
    </location>
</feature>
<feature type="active site" evidence="1">
    <location>
        <position position="52"/>
    </location>
</feature>
<feature type="active site" evidence="1">
    <location>
        <position position="124"/>
    </location>
</feature>
<feature type="binding site" evidence="1">
    <location>
        <position position="48"/>
    </location>
    <ligand>
        <name>Mg(2+)</name>
        <dbReference type="ChEBI" id="CHEBI:18420"/>
    </ligand>
</feature>
<feature type="binding site" evidence="1">
    <location>
        <position position="121"/>
    </location>
    <ligand>
        <name>Mg(2+)</name>
        <dbReference type="ChEBI" id="CHEBI:18420"/>
    </ligand>
</feature>
<feature type="binding site" evidence="1">
    <location>
        <position position="124"/>
    </location>
    <ligand>
        <name>Mg(2+)</name>
        <dbReference type="ChEBI" id="CHEBI:18420"/>
    </ligand>
</feature>
<proteinExistence type="inferred from homology"/>
<dbReference type="EC" id="3.1.26.3" evidence="1"/>
<dbReference type="EMBL" id="CP000030">
    <property type="protein sequence ID" value="AAV86932.1"/>
    <property type="molecule type" value="Genomic_DNA"/>
</dbReference>
<dbReference type="RefSeq" id="WP_011114570.1">
    <property type="nucleotide sequence ID" value="NC_004842.2"/>
</dbReference>
<dbReference type="SMR" id="Q5P9U8"/>
<dbReference type="KEGG" id="ama:AM1069"/>
<dbReference type="HOGENOM" id="CLU_000907_1_1_5"/>
<dbReference type="GO" id="GO:0005737">
    <property type="term" value="C:cytoplasm"/>
    <property type="evidence" value="ECO:0007669"/>
    <property type="project" value="UniProtKB-SubCell"/>
</dbReference>
<dbReference type="GO" id="GO:0003725">
    <property type="term" value="F:double-stranded RNA binding"/>
    <property type="evidence" value="ECO:0007669"/>
    <property type="project" value="TreeGrafter"/>
</dbReference>
<dbReference type="GO" id="GO:0046872">
    <property type="term" value="F:metal ion binding"/>
    <property type="evidence" value="ECO:0007669"/>
    <property type="project" value="UniProtKB-KW"/>
</dbReference>
<dbReference type="GO" id="GO:0004525">
    <property type="term" value="F:ribonuclease III activity"/>
    <property type="evidence" value="ECO:0007669"/>
    <property type="project" value="UniProtKB-UniRule"/>
</dbReference>
<dbReference type="GO" id="GO:0019843">
    <property type="term" value="F:rRNA binding"/>
    <property type="evidence" value="ECO:0007669"/>
    <property type="project" value="UniProtKB-KW"/>
</dbReference>
<dbReference type="GO" id="GO:0006397">
    <property type="term" value="P:mRNA processing"/>
    <property type="evidence" value="ECO:0007669"/>
    <property type="project" value="UniProtKB-UniRule"/>
</dbReference>
<dbReference type="GO" id="GO:0010468">
    <property type="term" value="P:regulation of gene expression"/>
    <property type="evidence" value="ECO:0007669"/>
    <property type="project" value="TreeGrafter"/>
</dbReference>
<dbReference type="GO" id="GO:0006364">
    <property type="term" value="P:rRNA processing"/>
    <property type="evidence" value="ECO:0007669"/>
    <property type="project" value="UniProtKB-UniRule"/>
</dbReference>
<dbReference type="GO" id="GO:0008033">
    <property type="term" value="P:tRNA processing"/>
    <property type="evidence" value="ECO:0007669"/>
    <property type="project" value="UniProtKB-KW"/>
</dbReference>
<dbReference type="CDD" id="cd10845">
    <property type="entry name" value="DSRM_RNAse_III_family"/>
    <property type="match status" value="1"/>
</dbReference>
<dbReference type="CDD" id="cd00593">
    <property type="entry name" value="RIBOc"/>
    <property type="match status" value="1"/>
</dbReference>
<dbReference type="FunFam" id="1.10.1520.10:FF:000001">
    <property type="entry name" value="Ribonuclease 3"/>
    <property type="match status" value="1"/>
</dbReference>
<dbReference type="FunFam" id="3.30.160.20:FF:000003">
    <property type="entry name" value="Ribonuclease 3"/>
    <property type="match status" value="1"/>
</dbReference>
<dbReference type="Gene3D" id="3.30.160.20">
    <property type="match status" value="1"/>
</dbReference>
<dbReference type="Gene3D" id="1.10.1520.10">
    <property type="entry name" value="Ribonuclease III domain"/>
    <property type="match status" value="1"/>
</dbReference>
<dbReference type="HAMAP" id="MF_00104">
    <property type="entry name" value="RNase_III"/>
    <property type="match status" value="1"/>
</dbReference>
<dbReference type="InterPro" id="IPR014720">
    <property type="entry name" value="dsRBD_dom"/>
</dbReference>
<dbReference type="InterPro" id="IPR011907">
    <property type="entry name" value="RNase_III"/>
</dbReference>
<dbReference type="InterPro" id="IPR000999">
    <property type="entry name" value="RNase_III_dom"/>
</dbReference>
<dbReference type="InterPro" id="IPR036389">
    <property type="entry name" value="RNase_III_sf"/>
</dbReference>
<dbReference type="NCBIfam" id="TIGR02191">
    <property type="entry name" value="RNaseIII"/>
    <property type="match status" value="1"/>
</dbReference>
<dbReference type="PANTHER" id="PTHR11207:SF0">
    <property type="entry name" value="RIBONUCLEASE 3"/>
    <property type="match status" value="1"/>
</dbReference>
<dbReference type="PANTHER" id="PTHR11207">
    <property type="entry name" value="RIBONUCLEASE III"/>
    <property type="match status" value="1"/>
</dbReference>
<dbReference type="Pfam" id="PF00035">
    <property type="entry name" value="dsrm"/>
    <property type="match status" value="1"/>
</dbReference>
<dbReference type="Pfam" id="PF14622">
    <property type="entry name" value="Ribonucleas_3_3"/>
    <property type="match status" value="1"/>
</dbReference>
<dbReference type="SMART" id="SM00358">
    <property type="entry name" value="DSRM"/>
    <property type="match status" value="1"/>
</dbReference>
<dbReference type="SMART" id="SM00535">
    <property type="entry name" value="RIBOc"/>
    <property type="match status" value="1"/>
</dbReference>
<dbReference type="SUPFAM" id="SSF54768">
    <property type="entry name" value="dsRNA-binding domain-like"/>
    <property type="match status" value="1"/>
</dbReference>
<dbReference type="SUPFAM" id="SSF69065">
    <property type="entry name" value="RNase III domain-like"/>
    <property type="match status" value="1"/>
</dbReference>
<dbReference type="PROSITE" id="PS50137">
    <property type="entry name" value="DS_RBD"/>
    <property type="match status" value="1"/>
</dbReference>
<dbReference type="PROSITE" id="PS00517">
    <property type="entry name" value="RNASE_3_1"/>
    <property type="match status" value="1"/>
</dbReference>
<dbReference type="PROSITE" id="PS50142">
    <property type="entry name" value="RNASE_3_2"/>
    <property type="match status" value="1"/>
</dbReference>
<name>RNC_ANAMM</name>
<accession>Q5P9U8</accession>
<comment type="function">
    <text evidence="1">Digests double-stranded RNA. Involved in the processing of primary rRNA transcript to yield the immediate precursors to the large and small rRNAs (23S and 16S). Processes some mRNAs, and tRNAs when they are encoded in the rRNA operon. Processes pre-crRNA and tracrRNA of type II CRISPR loci if present in the organism.</text>
</comment>
<comment type="catalytic activity">
    <reaction evidence="1">
        <text>Endonucleolytic cleavage to 5'-phosphomonoester.</text>
        <dbReference type="EC" id="3.1.26.3"/>
    </reaction>
</comment>
<comment type="cofactor">
    <cofactor evidence="1">
        <name>Mg(2+)</name>
        <dbReference type="ChEBI" id="CHEBI:18420"/>
    </cofactor>
</comment>
<comment type="subunit">
    <text evidence="1">Homodimer.</text>
</comment>
<comment type="subcellular location">
    <subcellularLocation>
        <location evidence="1">Cytoplasm</location>
    </subcellularLocation>
</comment>
<comment type="similarity">
    <text evidence="1">Belongs to the ribonuclease III family.</text>
</comment>
<protein>
    <recommendedName>
        <fullName evidence="1">Ribonuclease 3</fullName>
        <ecNumber evidence="1">3.1.26.3</ecNumber>
    </recommendedName>
    <alternativeName>
        <fullName evidence="1">Ribonuclease III</fullName>
        <shortName evidence="1">RNase III</shortName>
    </alternativeName>
</protein>
<sequence length="232" mass="25735">MHPVDKKSLALKIYEATGYQFRDLDLLLEALTHPRLSYKSAANYERLEFLGDAVLSMTVSEMLYRLFPDDDEGCLTRKRTALVRGSEVVEIARSIGLGELILMSGGERTCGGSDNPGTLENALEALIGAMYMDGGPEAYRSFIHKHWLARAQHMSYTPPQDPKTALQEWVQGRGWAMPLYKLVSKSGPEHKPVFAVEVSIQEHGNVLGTGSSKKLAEQEAAKLMLKKITELP</sequence>
<keyword id="KW-0963">Cytoplasm</keyword>
<keyword id="KW-0255">Endonuclease</keyword>
<keyword id="KW-0378">Hydrolase</keyword>
<keyword id="KW-0460">Magnesium</keyword>
<keyword id="KW-0479">Metal-binding</keyword>
<keyword id="KW-0507">mRNA processing</keyword>
<keyword id="KW-0540">Nuclease</keyword>
<keyword id="KW-0694">RNA-binding</keyword>
<keyword id="KW-0698">rRNA processing</keyword>
<keyword id="KW-0699">rRNA-binding</keyword>
<keyword id="KW-0819">tRNA processing</keyword>
<reference key="1">
    <citation type="journal article" date="2005" name="Proc. Natl. Acad. Sci. U.S.A.">
        <title>Complete genome sequencing of Anaplasma marginale reveals that the surface is skewed to two superfamilies of outer membrane proteins.</title>
        <authorList>
            <person name="Brayton K.A."/>
            <person name="Kappmeyer L.S."/>
            <person name="Herndon D.R."/>
            <person name="Dark M.J."/>
            <person name="Tibbals D.L."/>
            <person name="Palmer G.H."/>
            <person name="McGuire T.C."/>
            <person name="Knowles D.P. Jr."/>
        </authorList>
    </citation>
    <scope>NUCLEOTIDE SEQUENCE [LARGE SCALE GENOMIC DNA]</scope>
    <source>
        <strain>St. Maries</strain>
    </source>
</reference>